<protein>
    <recommendedName>
        <fullName evidence="1">Structure-specific endonuclease subunit SLX4</fullName>
    </recommendedName>
</protein>
<organism>
    <name type="scientific">Ajellomyces dermatitidis (strain ER-3 / ATCC MYA-2586)</name>
    <name type="common">Blastomyces dermatitidis</name>
    <dbReference type="NCBI Taxonomy" id="559297"/>
    <lineage>
        <taxon>Eukaryota</taxon>
        <taxon>Fungi</taxon>
        <taxon>Dikarya</taxon>
        <taxon>Ascomycota</taxon>
        <taxon>Pezizomycotina</taxon>
        <taxon>Eurotiomycetes</taxon>
        <taxon>Eurotiomycetidae</taxon>
        <taxon>Onygenales</taxon>
        <taxon>Ajellomycetaceae</taxon>
        <taxon>Blastomyces</taxon>
    </lineage>
</organism>
<accession>C5GBK9</accession>
<name>SLX4_AJEDR</name>
<comment type="function">
    <text evidence="1">Regulatory subunit of the SLX1-SLX4 structure-specific endonuclease that resolves DNA secondary structures generated during DNA repair and recombination. Has endonuclease activity towards branched DNA substrates, introducing single-strand cuts in duplex DNA close to junctions with ss-DNA.</text>
</comment>
<comment type="subunit">
    <text evidence="1">Forms a heterodimer with SLX1.</text>
</comment>
<comment type="subcellular location">
    <subcellularLocation>
        <location evidence="1">Nucleus</location>
    </subcellularLocation>
</comment>
<comment type="PTM">
    <text evidence="1">Phosphorylated in response to DNA damage.</text>
</comment>
<comment type="similarity">
    <text evidence="1">Belongs to the SLX4 family.</text>
</comment>
<keyword id="KW-0227">DNA damage</keyword>
<keyword id="KW-0233">DNA recombination</keyword>
<keyword id="KW-0234">DNA repair</keyword>
<keyword id="KW-0539">Nucleus</keyword>
<keyword id="KW-0597">Phosphoprotein</keyword>
<feature type="chain" id="PRO_0000388009" description="Structure-specific endonuclease subunit SLX4">
    <location>
        <begin position="1"/>
        <end position="856"/>
    </location>
</feature>
<feature type="region of interest" description="Disordered" evidence="2">
    <location>
        <begin position="1"/>
        <end position="24"/>
    </location>
</feature>
<feature type="region of interest" description="Disordered" evidence="2">
    <location>
        <begin position="39"/>
        <end position="61"/>
    </location>
</feature>
<feature type="region of interest" description="Disordered" evidence="2">
    <location>
        <begin position="88"/>
        <end position="121"/>
    </location>
</feature>
<feature type="region of interest" description="Disordered" evidence="2">
    <location>
        <begin position="139"/>
        <end position="201"/>
    </location>
</feature>
<feature type="region of interest" description="Disordered" evidence="2">
    <location>
        <begin position="296"/>
        <end position="326"/>
    </location>
</feature>
<feature type="region of interest" description="Disordered" evidence="2">
    <location>
        <begin position="362"/>
        <end position="392"/>
    </location>
</feature>
<feature type="region of interest" description="Disordered" evidence="2">
    <location>
        <begin position="621"/>
        <end position="640"/>
    </location>
</feature>
<feature type="region of interest" description="Disordered" evidence="2">
    <location>
        <begin position="653"/>
        <end position="688"/>
    </location>
</feature>
<feature type="region of interest" description="Disordered" evidence="2">
    <location>
        <begin position="715"/>
        <end position="742"/>
    </location>
</feature>
<feature type="compositionally biased region" description="Polar residues" evidence="2">
    <location>
        <begin position="1"/>
        <end position="19"/>
    </location>
</feature>
<feature type="compositionally biased region" description="Low complexity" evidence="2">
    <location>
        <begin position="51"/>
        <end position="60"/>
    </location>
</feature>
<feature type="compositionally biased region" description="Basic residues" evidence="2">
    <location>
        <begin position="139"/>
        <end position="152"/>
    </location>
</feature>
<feature type="compositionally biased region" description="Polar residues" evidence="2">
    <location>
        <begin position="296"/>
        <end position="309"/>
    </location>
</feature>
<feature type="compositionally biased region" description="Polar residues" evidence="2">
    <location>
        <begin position="673"/>
        <end position="686"/>
    </location>
</feature>
<proteinExistence type="inferred from homology"/>
<evidence type="ECO:0000255" key="1">
    <source>
        <dbReference type="HAMAP-Rule" id="MF_03110"/>
    </source>
</evidence>
<evidence type="ECO:0000256" key="2">
    <source>
        <dbReference type="SAM" id="MobiDB-lite"/>
    </source>
</evidence>
<dbReference type="EMBL" id="EQ999974">
    <property type="protein sequence ID" value="EEQ86622.1"/>
    <property type="molecule type" value="Genomic_DNA"/>
</dbReference>
<dbReference type="SMR" id="C5GBK9"/>
<dbReference type="STRING" id="559297.C5GBK9"/>
<dbReference type="VEuPathDB" id="FungiDB:BDCG_01742"/>
<dbReference type="eggNOG" id="ENOG502SEB3">
    <property type="taxonomic scope" value="Eukaryota"/>
</dbReference>
<dbReference type="HOGENOM" id="CLU_016773_0_0_1"/>
<dbReference type="OMA" id="SICCLWK"/>
<dbReference type="GO" id="GO:0033557">
    <property type="term" value="C:Slx1-Slx4 complex"/>
    <property type="evidence" value="ECO:0007669"/>
    <property type="project" value="UniProtKB-UniRule"/>
</dbReference>
<dbReference type="GO" id="GO:0017108">
    <property type="term" value="F:5'-flap endonuclease activity"/>
    <property type="evidence" value="ECO:0007669"/>
    <property type="project" value="InterPro"/>
</dbReference>
<dbReference type="GO" id="GO:0006310">
    <property type="term" value="P:DNA recombination"/>
    <property type="evidence" value="ECO:0007669"/>
    <property type="project" value="UniProtKB-UniRule"/>
</dbReference>
<dbReference type="GO" id="GO:0006281">
    <property type="term" value="P:DNA repair"/>
    <property type="evidence" value="ECO:0007669"/>
    <property type="project" value="UniProtKB-UniRule"/>
</dbReference>
<dbReference type="GO" id="GO:0006260">
    <property type="term" value="P:DNA replication"/>
    <property type="evidence" value="ECO:0007669"/>
    <property type="project" value="InterPro"/>
</dbReference>
<dbReference type="CDD" id="cd22999">
    <property type="entry name" value="SAP_SLX4"/>
    <property type="match status" value="1"/>
</dbReference>
<dbReference type="HAMAP" id="MF_03110">
    <property type="entry name" value="Endonuc_su_Slx4"/>
    <property type="match status" value="1"/>
</dbReference>
<dbReference type="InterPro" id="IPR027784">
    <property type="entry name" value="Slx4_ascomycetes"/>
</dbReference>
<dbReference type="InterPro" id="IPR018574">
    <property type="entry name" value="Structure-sp_endonuc_su_Slx4"/>
</dbReference>
<dbReference type="Pfam" id="PF09494">
    <property type="entry name" value="Slx4"/>
    <property type="match status" value="1"/>
</dbReference>
<sequence length="856" mass="93095">MDNAAIASQSNTPPSNGRSSARFVTPISVHSSPITAEVIEPSSPFSPPSPSTLLTSLSKSPSHKISNLQMDGAKTTCLEVLQNSSLVVDSPKRQDKSITGSKAKPASTMRHGQRTASHKMATQTEIQTVDGDRLIVSPKTRKKKAATAKRTRKQDGVAERRLHGHVSKVKSPGDLKLDAKIPPSKPCDNKAPSVGDNTDNELERQTGGLQLEKATKRRLDWTPTKEGPIPMVDLAEVHSSSCGKSVIRTHSAGTLLSNYGFSGVVNTSLAPMPETCDNGPTTKRLMELQNFYSASGIQTPTESRPATNDSQSISSKQQRVKVKKPQKAKLTTLTSYVTAKYSVVDQTADLDRIETVNSGKNKKMGVTKRTSGTERANAARGKSDTLKNGNGPPVFKVVPPLEAFKSFDGQELLFGTSSQLEHGHSEDQDEEIQHTADSINKSNVVPRPAVSKGLGSSLFRLSSSKNLWSASSRDLTGAVLQVDEIDLSERSIEVSTPAAKYKRKTGIRDLSGQNVIDVEKDTRTLAANIDTRELDNMNEPSLAEDDLVYRENLESTNAKLNSQTPANISEAMLERPLPDKPIFGGFTTSELAKQVAAYGFKPIKSRDKMISLLEKCWENQSKSSKLEPKPNQRNHKSQGDDLAERQLLGLKPRSDSISFVNTRSPKKRLAKTSVKSQESKSFSLSNEGPRITSKLPMKRFVSPCAILIDDDQSSDSVGEALPLSPSHSSNGNGTLHHPQDCDEIHAPTTQMAIRSAKSSISVSSTTNLPSLSSQITKAVQSQPRIRAFKGLKQPTWYEKILMYDPIQLEDLAAWLNTGGFGLIGEDREVGAGVVREWCESKGICCVWKKQASAKSH</sequence>
<reference key="1">
    <citation type="journal article" date="2015" name="PLoS Genet.">
        <title>The dynamic genome and transcriptome of the human fungal pathogen Blastomyces and close relative Emmonsia.</title>
        <authorList>
            <person name="Munoz J.F."/>
            <person name="Gauthier G.M."/>
            <person name="Desjardins C.A."/>
            <person name="Gallo J.E."/>
            <person name="Holder J."/>
            <person name="Sullivan T.D."/>
            <person name="Marty A.J."/>
            <person name="Carmen J.C."/>
            <person name="Chen Z."/>
            <person name="Ding L."/>
            <person name="Gujja S."/>
            <person name="Magrini V."/>
            <person name="Misas E."/>
            <person name="Mitreva M."/>
            <person name="Priest M."/>
            <person name="Saif S."/>
            <person name="Whiston E.A."/>
            <person name="Young S."/>
            <person name="Zeng Q."/>
            <person name="Goldman W.E."/>
            <person name="Mardis E.R."/>
            <person name="Taylor J.W."/>
            <person name="McEwen J.G."/>
            <person name="Clay O.K."/>
            <person name="Klein B.S."/>
            <person name="Cuomo C.A."/>
        </authorList>
    </citation>
    <scope>NUCLEOTIDE SEQUENCE [LARGE SCALE GENOMIC DNA]</scope>
    <source>
        <strain>ER-3 / ATCC MYA-2586</strain>
    </source>
</reference>
<gene>
    <name evidence="1" type="primary">SLX4</name>
    <name type="ORF">BDCG_01742</name>
</gene>